<reference key="1">
    <citation type="submission" date="2008-06" db="EMBL/GenBank/DDBJ databases">
        <title>Complete sequence of chromosome of Prosthecochloris aestuarii DSM 271.</title>
        <authorList>
            <consortium name="US DOE Joint Genome Institute"/>
            <person name="Lucas S."/>
            <person name="Copeland A."/>
            <person name="Lapidus A."/>
            <person name="Glavina del Rio T."/>
            <person name="Dalin E."/>
            <person name="Tice H."/>
            <person name="Bruce D."/>
            <person name="Goodwin L."/>
            <person name="Pitluck S."/>
            <person name="Schmutz J."/>
            <person name="Larimer F."/>
            <person name="Land M."/>
            <person name="Hauser L."/>
            <person name="Kyrpides N."/>
            <person name="Anderson I."/>
            <person name="Liu Z."/>
            <person name="Li T."/>
            <person name="Zhao F."/>
            <person name="Overmann J."/>
            <person name="Bryant D.A."/>
            <person name="Richardson P."/>
        </authorList>
    </citation>
    <scope>NUCLEOTIDE SEQUENCE [LARGE SCALE GENOMIC DNA]</scope>
    <source>
        <strain>DSM 271 / SK 413</strain>
    </source>
</reference>
<keyword id="KW-0686">Riboflavin biosynthesis</keyword>
<keyword id="KW-0808">Transferase</keyword>
<name>RISB_PROA2</name>
<organism>
    <name type="scientific">Prosthecochloris aestuarii (strain DSM 271 / SK 413)</name>
    <dbReference type="NCBI Taxonomy" id="290512"/>
    <lineage>
        <taxon>Bacteria</taxon>
        <taxon>Pseudomonadati</taxon>
        <taxon>Chlorobiota</taxon>
        <taxon>Chlorobiia</taxon>
        <taxon>Chlorobiales</taxon>
        <taxon>Chlorobiaceae</taxon>
        <taxon>Prosthecochloris</taxon>
    </lineage>
</organism>
<dbReference type="EC" id="2.5.1.78" evidence="1"/>
<dbReference type="EMBL" id="CP001108">
    <property type="protein sequence ID" value="ACF45314.1"/>
    <property type="molecule type" value="Genomic_DNA"/>
</dbReference>
<dbReference type="RefSeq" id="WP_012504851.1">
    <property type="nucleotide sequence ID" value="NC_011059.1"/>
</dbReference>
<dbReference type="SMR" id="B4S3W8"/>
<dbReference type="STRING" id="290512.Paes_0257"/>
<dbReference type="KEGG" id="paa:Paes_0257"/>
<dbReference type="eggNOG" id="COG0054">
    <property type="taxonomic scope" value="Bacteria"/>
</dbReference>
<dbReference type="HOGENOM" id="CLU_089358_1_1_10"/>
<dbReference type="UniPathway" id="UPA00275">
    <property type="reaction ID" value="UER00404"/>
</dbReference>
<dbReference type="Proteomes" id="UP000002725">
    <property type="component" value="Chromosome"/>
</dbReference>
<dbReference type="GO" id="GO:0005829">
    <property type="term" value="C:cytosol"/>
    <property type="evidence" value="ECO:0007669"/>
    <property type="project" value="TreeGrafter"/>
</dbReference>
<dbReference type="GO" id="GO:0009349">
    <property type="term" value="C:riboflavin synthase complex"/>
    <property type="evidence" value="ECO:0007669"/>
    <property type="project" value="InterPro"/>
</dbReference>
<dbReference type="GO" id="GO:0000906">
    <property type="term" value="F:6,7-dimethyl-8-ribityllumazine synthase activity"/>
    <property type="evidence" value="ECO:0007669"/>
    <property type="project" value="UniProtKB-UniRule"/>
</dbReference>
<dbReference type="GO" id="GO:0009231">
    <property type="term" value="P:riboflavin biosynthetic process"/>
    <property type="evidence" value="ECO:0007669"/>
    <property type="project" value="UniProtKB-UniRule"/>
</dbReference>
<dbReference type="CDD" id="cd09209">
    <property type="entry name" value="Lumazine_synthase-I"/>
    <property type="match status" value="1"/>
</dbReference>
<dbReference type="FunFam" id="3.40.50.960:FF:000001">
    <property type="entry name" value="6,7-dimethyl-8-ribityllumazine synthase"/>
    <property type="match status" value="1"/>
</dbReference>
<dbReference type="Gene3D" id="3.40.50.960">
    <property type="entry name" value="Lumazine/riboflavin synthase"/>
    <property type="match status" value="1"/>
</dbReference>
<dbReference type="HAMAP" id="MF_00178">
    <property type="entry name" value="Lumazine_synth"/>
    <property type="match status" value="1"/>
</dbReference>
<dbReference type="InterPro" id="IPR034964">
    <property type="entry name" value="LS"/>
</dbReference>
<dbReference type="InterPro" id="IPR002180">
    <property type="entry name" value="LS/RS"/>
</dbReference>
<dbReference type="InterPro" id="IPR036467">
    <property type="entry name" value="LS/RS_sf"/>
</dbReference>
<dbReference type="NCBIfam" id="TIGR00114">
    <property type="entry name" value="lumazine-synth"/>
    <property type="match status" value="1"/>
</dbReference>
<dbReference type="NCBIfam" id="NF000812">
    <property type="entry name" value="PRK00061.1-4"/>
    <property type="match status" value="1"/>
</dbReference>
<dbReference type="PANTHER" id="PTHR21058:SF0">
    <property type="entry name" value="6,7-DIMETHYL-8-RIBITYLLUMAZINE SYNTHASE"/>
    <property type="match status" value="1"/>
</dbReference>
<dbReference type="PANTHER" id="PTHR21058">
    <property type="entry name" value="6,7-DIMETHYL-8-RIBITYLLUMAZINE SYNTHASE DMRL SYNTHASE LUMAZINE SYNTHASE"/>
    <property type="match status" value="1"/>
</dbReference>
<dbReference type="Pfam" id="PF00885">
    <property type="entry name" value="DMRL_synthase"/>
    <property type="match status" value="1"/>
</dbReference>
<dbReference type="SUPFAM" id="SSF52121">
    <property type="entry name" value="Lumazine synthase"/>
    <property type="match status" value="1"/>
</dbReference>
<evidence type="ECO:0000255" key="1">
    <source>
        <dbReference type="HAMAP-Rule" id="MF_00178"/>
    </source>
</evidence>
<sequence length="155" mass="16432">MTIKTIEGTLDARNSRFALVVSRFNDFIGQKLVEGAVDCIVRHGGSEEQIALYKCPGAFELPSVAKKVAVSGRYDAVITLGAIIRGATSHYDVIAAEATKGVAQVGLDTMIPVTFGVLTTDNLEQAIERAGTKAGNKGFDAALAAIEMVNLYQQV</sequence>
<protein>
    <recommendedName>
        <fullName evidence="1">6,7-dimethyl-8-ribityllumazine synthase</fullName>
        <shortName evidence="1">DMRL synthase</shortName>
        <shortName evidence="1">LS</shortName>
        <shortName evidence="1">Lumazine synthase</shortName>
        <ecNumber evidence="1">2.5.1.78</ecNumber>
    </recommendedName>
</protein>
<proteinExistence type="inferred from homology"/>
<feature type="chain" id="PRO_1000098217" description="6,7-dimethyl-8-ribityllumazine synthase">
    <location>
        <begin position="1"/>
        <end position="155"/>
    </location>
</feature>
<feature type="active site" description="Proton donor" evidence="1">
    <location>
        <position position="90"/>
    </location>
</feature>
<feature type="binding site" evidence="1">
    <location>
        <position position="24"/>
    </location>
    <ligand>
        <name>5-amino-6-(D-ribitylamino)uracil</name>
        <dbReference type="ChEBI" id="CHEBI:15934"/>
    </ligand>
</feature>
<feature type="binding site" evidence="1">
    <location>
        <begin position="58"/>
        <end position="60"/>
    </location>
    <ligand>
        <name>5-amino-6-(D-ribitylamino)uracil</name>
        <dbReference type="ChEBI" id="CHEBI:15934"/>
    </ligand>
</feature>
<feature type="binding site" evidence="1">
    <location>
        <begin position="82"/>
        <end position="84"/>
    </location>
    <ligand>
        <name>5-amino-6-(D-ribitylamino)uracil</name>
        <dbReference type="ChEBI" id="CHEBI:15934"/>
    </ligand>
</feature>
<feature type="binding site" evidence="1">
    <location>
        <begin position="87"/>
        <end position="88"/>
    </location>
    <ligand>
        <name>(2S)-2-hydroxy-3-oxobutyl phosphate</name>
        <dbReference type="ChEBI" id="CHEBI:58830"/>
    </ligand>
</feature>
<feature type="binding site" evidence="1">
    <location>
        <position position="115"/>
    </location>
    <ligand>
        <name>5-amino-6-(D-ribitylamino)uracil</name>
        <dbReference type="ChEBI" id="CHEBI:15934"/>
    </ligand>
</feature>
<feature type="binding site" evidence="1">
    <location>
        <position position="129"/>
    </location>
    <ligand>
        <name>(2S)-2-hydroxy-3-oxobutyl phosphate</name>
        <dbReference type="ChEBI" id="CHEBI:58830"/>
    </ligand>
</feature>
<accession>B4S3W8</accession>
<gene>
    <name evidence="1" type="primary">ribH</name>
    <name type="ordered locus">Paes_0257</name>
</gene>
<comment type="function">
    <text evidence="1">Catalyzes the formation of 6,7-dimethyl-8-ribityllumazine by condensation of 5-amino-6-(D-ribitylamino)uracil with 3,4-dihydroxy-2-butanone 4-phosphate. This is the penultimate step in the biosynthesis of riboflavin.</text>
</comment>
<comment type="catalytic activity">
    <reaction evidence="1">
        <text>(2S)-2-hydroxy-3-oxobutyl phosphate + 5-amino-6-(D-ribitylamino)uracil = 6,7-dimethyl-8-(1-D-ribityl)lumazine + phosphate + 2 H2O + H(+)</text>
        <dbReference type="Rhea" id="RHEA:26152"/>
        <dbReference type="ChEBI" id="CHEBI:15377"/>
        <dbReference type="ChEBI" id="CHEBI:15378"/>
        <dbReference type="ChEBI" id="CHEBI:15934"/>
        <dbReference type="ChEBI" id="CHEBI:43474"/>
        <dbReference type="ChEBI" id="CHEBI:58201"/>
        <dbReference type="ChEBI" id="CHEBI:58830"/>
        <dbReference type="EC" id="2.5.1.78"/>
    </reaction>
</comment>
<comment type="pathway">
    <text evidence="1">Cofactor biosynthesis; riboflavin biosynthesis; riboflavin from 2-hydroxy-3-oxobutyl phosphate and 5-amino-6-(D-ribitylamino)uracil: step 1/2.</text>
</comment>
<comment type="similarity">
    <text evidence="1">Belongs to the DMRL synthase family.</text>
</comment>